<protein>
    <recommendedName>
        <fullName evidence="1">Large ribosomal subunit protein bL9</fullName>
    </recommendedName>
    <alternativeName>
        <fullName evidence="2">50S ribosomal protein L9</fullName>
    </alternativeName>
</protein>
<feature type="chain" id="PRO_1000014783" description="Large ribosomal subunit protein bL9">
    <location>
        <begin position="1"/>
        <end position="149"/>
    </location>
</feature>
<sequence length="149" mass="16326">MKVIFLKDVKGKGKKGEIKNVADGYANNFLFKQGLAIEATPANLKALEAQKQKEQRQAAEELANAKKLKEQLEKLTVEIAAKAGEGGRLFGSITSKQIAEALQAQHGLKLDKRKIELNDAIRALGYTNVPVKLHPEVSATLKVHVTEQK</sequence>
<evidence type="ECO:0000255" key="1">
    <source>
        <dbReference type="HAMAP-Rule" id="MF_00503"/>
    </source>
</evidence>
<evidence type="ECO:0000305" key="2"/>
<reference key="1">
    <citation type="journal article" date="2007" name="Proc. Natl. Acad. Sci. U.S.A.">
        <title>Genome and proteome of long-chain alkane degrading Geobacillus thermodenitrificans NG80-2 isolated from a deep-subsurface oil reservoir.</title>
        <authorList>
            <person name="Feng L."/>
            <person name="Wang W."/>
            <person name="Cheng J."/>
            <person name="Ren Y."/>
            <person name="Zhao G."/>
            <person name="Gao C."/>
            <person name="Tang Y."/>
            <person name="Liu X."/>
            <person name="Han W."/>
            <person name="Peng X."/>
            <person name="Liu R."/>
            <person name="Wang L."/>
        </authorList>
    </citation>
    <scope>NUCLEOTIDE SEQUENCE [LARGE SCALE GENOMIC DNA]</scope>
    <source>
        <strain>NG80-2</strain>
    </source>
</reference>
<organism>
    <name type="scientific">Geobacillus thermodenitrificans (strain NG80-2)</name>
    <dbReference type="NCBI Taxonomy" id="420246"/>
    <lineage>
        <taxon>Bacteria</taxon>
        <taxon>Bacillati</taxon>
        <taxon>Bacillota</taxon>
        <taxon>Bacilli</taxon>
        <taxon>Bacillales</taxon>
        <taxon>Anoxybacillaceae</taxon>
        <taxon>Geobacillus</taxon>
    </lineage>
</organism>
<keyword id="KW-0687">Ribonucleoprotein</keyword>
<keyword id="KW-0689">Ribosomal protein</keyword>
<keyword id="KW-0694">RNA-binding</keyword>
<keyword id="KW-0699">rRNA-binding</keyword>
<dbReference type="EMBL" id="CP000557">
    <property type="protein sequence ID" value="ABO68755.1"/>
    <property type="molecule type" value="Genomic_DNA"/>
</dbReference>
<dbReference type="RefSeq" id="WP_011888453.1">
    <property type="nucleotide sequence ID" value="NC_009328.1"/>
</dbReference>
<dbReference type="BMRB" id="A4ITV1"/>
<dbReference type="SMR" id="A4ITV1"/>
<dbReference type="KEGG" id="gtn:GTNG_3418"/>
<dbReference type="eggNOG" id="COG0359">
    <property type="taxonomic scope" value="Bacteria"/>
</dbReference>
<dbReference type="HOGENOM" id="CLU_078938_3_2_9"/>
<dbReference type="Proteomes" id="UP000001578">
    <property type="component" value="Chromosome"/>
</dbReference>
<dbReference type="GO" id="GO:1990904">
    <property type="term" value="C:ribonucleoprotein complex"/>
    <property type="evidence" value="ECO:0007669"/>
    <property type="project" value="UniProtKB-KW"/>
</dbReference>
<dbReference type="GO" id="GO:0005840">
    <property type="term" value="C:ribosome"/>
    <property type="evidence" value="ECO:0007669"/>
    <property type="project" value="UniProtKB-KW"/>
</dbReference>
<dbReference type="GO" id="GO:0019843">
    <property type="term" value="F:rRNA binding"/>
    <property type="evidence" value="ECO:0007669"/>
    <property type="project" value="UniProtKB-UniRule"/>
</dbReference>
<dbReference type="GO" id="GO:0003735">
    <property type="term" value="F:structural constituent of ribosome"/>
    <property type="evidence" value="ECO:0007669"/>
    <property type="project" value="InterPro"/>
</dbReference>
<dbReference type="GO" id="GO:0006412">
    <property type="term" value="P:translation"/>
    <property type="evidence" value="ECO:0007669"/>
    <property type="project" value="UniProtKB-UniRule"/>
</dbReference>
<dbReference type="FunFam" id="3.10.430.100:FF:000002">
    <property type="entry name" value="50S ribosomal protein L9"/>
    <property type="match status" value="1"/>
</dbReference>
<dbReference type="FunFam" id="3.40.5.10:FF:000002">
    <property type="entry name" value="50S ribosomal protein L9"/>
    <property type="match status" value="1"/>
</dbReference>
<dbReference type="Gene3D" id="3.10.430.100">
    <property type="entry name" value="Ribosomal protein L9, C-terminal domain"/>
    <property type="match status" value="1"/>
</dbReference>
<dbReference type="Gene3D" id="3.40.5.10">
    <property type="entry name" value="Ribosomal protein L9, N-terminal domain"/>
    <property type="match status" value="1"/>
</dbReference>
<dbReference type="HAMAP" id="MF_00503">
    <property type="entry name" value="Ribosomal_bL9"/>
    <property type="match status" value="1"/>
</dbReference>
<dbReference type="InterPro" id="IPR000244">
    <property type="entry name" value="Ribosomal_bL9"/>
</dbReference>
<dbReference type="InterPro" id="IPR009027">
    <property type="entry name" value="Ribosomal_bL9/RNase_H1_N"/>
</dbReference>
<dbReference type="InterPro" id="IPR020594">
    <property type="entry name" value="Ribosomal_bL9_bac/chp"/>
</dbReference>
<dbReference type="InterPro" id="IPR020069">
    <property type="entry name" value="Ribosomal_bL9_C"/>
</dbReference>
<dbReference type="InterPro" id="IPR036791">
    <property type="entry name" value="Ribosomal_bL9_C_sf"/>
</dbReference>
<dbReference type="InterPro" id="IPR020070">
    <property type="entry name" value="Ribosomal_bL9_N"/>
</dbReference>
<dbReference type="InterPro" id="IPR036935">
    <property type="entry name" value="Ribosomal_bL9_N_sf"/>
</dbReference>
<dbReference type="NCBIfam" id="TIGR00158">
    <property type="entry name" value="L9"/>
    <property type="match status" value="1"/>
</dbReference>
<dbReference type="PANTHER" id="PTHR21368">
    <property type="entry name" value="50S RIBOSOMAL PROTEIN L9"/>
    <property type="match status" value="1"/>
</dbReference>
<dbReference type="Pfam" id="PF03948">
    <property type="entry name" value="Ribosomal_L9_C"/>
    <property type="match status" value="1"/>
</dbReference>
<dbReference type="Pfam" id="PF01281">
    <property type="entry name" value="Ribosomal_L9_N"/>
    <property type="match status" value="1"/>
</dbReference>
<dbReference type="SUPFAM" id="SSF55658">
    <property type="entry name" value="L9 N-domain-like"/>
    <property type="match status" value="1"/>
</dbReference>
<dbReference type="SUPFAM" id="SSF55653">
    <property type="entry name" value="Ribosomal protein L9 C-domain"/>
    <property type="match status" value="1"/>
</dbReference>
<dbReference type="PROSITE" id="PS00651">
    <property type="entry name" value="RIBOSOMAL_L9"/>
    <property type="match status" value="1"/>
</dbReference>
<accession>A4ITV1</accession>
<comment type="function">
    <text evidence="1">Binds to the 23S rRNA.</text>
</comment>
<comment type="similarity">
    <text evidence="1">Belongs to the bacterial ribosomal protein bL9 family.</text>
</comment>
<name>RL9_GEOTN</name>
<proteinExistence type="inferred from homology"/>
<gene>
    <name evidence="1" type="primary">rplI</name>
    <name type="ordered locus">GTNG_3418</name>
</gene>